<dbReference type="EMBL" id="L09108">
    <property type="protein sequence ID" value="AAA25863.1"/>
    <property type="molecule type" value="Genomic_DNA"/>
</dbReference>
<dbReference type="EMBL" id="CP000869">
    <property type="protein sequence ID" value="ABX18406.1"/>
    <property type="molecule type" value="Genomic_DNA"/>
</dbReference>
<dbReference type="EMBL" id="CP000870">
    <property type="protein sequence ID" value="ABX19298.1"/>
    <property type="molecule type" value="Genomic_DNA"/>
</dbReference>
<dbReference type="EMBL" id="CP000871">
    <property type="protein sequence ID" value="ABX19859.1"/>
    <property type="molecule type" value="Genomic_DNA"/>
</dbReference>
<dbReference type="EMBL" id="AP009386">
    <property type="protein sequence ID" value="BAG45646.1"/>
    <property type="molecule type" value="Genomic_DNA"/>
</dbReference>
<dbReference type="EMBL" id="AP009387">
    <property type="protein sequence ID" value="BAG47689.1"/>
    <property type="molecule type" value="Genomic_DNA"/>
</dbReference>
<dbReference type="EMBL" id="AP009388">
    <property type="protein sequence ID" value="BAG48003.1"/>
    <property type="molecule type" value="Genomic_DNA"/>
</dbReference>
<dbReference type="SMR" id="Q51649"/>
<dbReference type="STRING" id="395019.BMULJ_03785"/>
<dbReference type="KEGG" id="bmj:BMULJ_03785"/>
<dbReference type="KEGG" id="bmj:BMULJ_05881"/>
<dbReference type="KEGG" id="bmj:BMULJ_06213"/>
<dbReference type="KEGG" id="bmu:Bmul_4730"/>
<dbReference type="KEGG" id="bmu:Bmul_5628"/>
<dbReference type="KEGG" id="bmu:Bmul_6206"/>
<dbReference type="eggNOG" id="COG4584">
    <property type="taxonomic scope" value="Bacteria"/>
</dbReference>
<dbReference type="HOGENOM" id="CLU_020626_11_0_4"/>
<dbReference type="Proteomes" id="UP000008815">
    <property type="component" value="Chromosome 2"/>
</dbReference>
<dbReference type="Proteomes" id="UP000008815">
    <property type="component" value="Chromosome 3"/>
</dbReference>
<dbReference type="Proteomes" id="UP000008815">
    <property type="component" value="Plasmid pTGL1"/>
</dbReference>
<dbReference type="GO" id="GO:0003677">
    <property type="term" value="F:DNA binding"/>
    <property type="evidence" value="ECO:0007669"/>
    <property type="project" value="UniProtKB-KW"/>
</dbReference>
<dbReference type="GO" id="GO:0015074">
    <property type="term" value="P:DNA integration"/>
    <property type="evidence" value="ECO:0007669"/>
    <property type="project" value="InterPro"/>
</dbReference>
<dbReference type="GO" id="GO:0006310">
    <property type="term" value="P:DNA recombination"/>
    <property type="evidence" value="ECO:0007669"/>
    <property type="project" value="UniProtKB-KW"/>
</dbReference>
<dbReference type="GO" id="GO:0032196">
    <property type="term" value="P:transposition"/>
    <property type="evidence" value="ECO:0007669"/>
    <property type="project" value="UniProtKB-KW"/>
</dbReference>
<dbReference type="Gene3D" id="3.30.420.10">
    <property type="entry name" value="Ribonuclease H-like superfamily/Ribonuclease H"/>
    <property type="match status" value="1"/>
</dbReference>
<dbReference type="InterPro" id="IPR017895">
    <property type="entry name" value="HTH_IS408/IS1162_type"/>
</dbReference>
<dbReference type="InterPro" id="IPR001584">
    <property type="entry name" value="Integrase_cat-core"/>
</dbReference>
<dbReference type="InterPro" id="IPR054353">
    <property type="entry name" value="IstA-like_C"/>
</dbReference>
<dbReference type="InterPro" id="IPR012337">
    <property type="entry name" value="RNaseH-like_sf"/>
</dbReference>
<dbReference type="InterPro" id="IPR036397">
    <property type="entry name" value="RNaseH_sf"/>
</dbReference>
<dbReference type="NCBIfam" id="NF033546">
    <property type="entry name" value="transpos_IS21"/>
    <property type="match status" value="1"/>
</dbReference>
<dbReference type="PANTHER" id="PTHR35004">
    <property type="entry name" value="TRANSPOSASE RV3428C-RELATED"/>
    <property type="match status" value="1"/>
</dbReference>
<dbReference type="PANTHER" id="PTHR35004:SF8">
    <property type="entry name" value="TRANSPOSASE RV3428C-RELATED"/>
    <property type="match status" value="1"/>
</dbReference>
<dbReference type="Pfam" id="PF22483">
    <property type="entry name" value="Mu-transpos_C_2"/>
    <property type="match status" value="1"/>
</dbReference>
<dbReference type="SUPFAM" id="SSF53098">
    <property type="entry name" value="Ribonuclease H-like"/>
    <property type="match status" value="1"/>
</dbReference>
<dbReference type="PROSITE" id="PS50532">
    <property type="entry name" value="HTH_IS408"/>
    <property type="match status" value="1"/>
</dbReference>
<dbReference type="PROSITE" id="PS50994">
    <property type="entry name" value="INTEGRASE"/>
    <property type="match status" value="1"/>
</dbReference>
<comment type="function">
    <text evidence="4">Required for the transposition of the insertion element.</text>
</comment>
<comment type="similarity">
    <text evidence="4">Belongs to the transposase IS21/IS408/IS1162 family.</text>
</comment>
<organism>
    <name type="scientific">Burkholderia multivorans (strain ATCC 17616 / 249)</name>
    <dbReference type="NCBI Taxonomy" id="395019"/>
    <lineage>
        <taxon>Bacteria</taxon>
        <taxon>Pseudomonadati</taxon>
        <taxon>Pseudomonadota</taxon>
        <taxon>Betaproteobacteria</taxon>
        <taxon>Burkholderiales</taxon>
        <taxon>Burkholderiaceae</taxon>
        <taxon>Burkholderia</taxon>
        <taxon>Burkholderia cepacia complex</taxon>
    </lineage>
</organism>
<reference key="1">
    <citation type="journal article" date="1994" name="Plasmid">
        <title>Characteristics of IS401, a new member of the IS3 family implicated in plasmid rearrangements in Pseudomonas cepacia.</title>
        <authorList>
            <person name="Byrne A.M."/>
            <person name="Lessie T.G."/>
        </authorList>
    </citation>
    <scope>NUCLEOTIDE SEQUENCE [GENOMIC DNA]</scope>
</reference>
<reference key="2">
    <citation type="submission" date="2007-10" db="EMBL/GenBank/DDBJ databases">
        <title>Complete sequence of chromosome 2 of Burkholderia multivorans ATCC 17616.</title>
        <authorList>
            <person name="Copeland A."/>
            <person name="Lucas S."/>
            <person name="Lapidus A."/>
            <person name="Barry K."/>
            <person name="Glavina del Rio T."/>
            <person name="Dalin E."/>
            <person name="Tice H."/>
            <person name="Pitluck S."/>
            <person name="Chain P."/>
            <person name="Malfatti S."/>
            <person name="Shin M."/>
            <person name="Vergez L."/>
            <person name="Schmutz J."/>
            <person name="Larimer F."/>
            <person name="Land M."/>
            <person name="Hauser L."/>
            <person name="Kyrpides N."/>
            <person name="Kim E."/>
            <person name="Tiedje J."/>
            <person name="Richardson P."/>
        </authorList>
    </citation>
    <scope>NUCLEOTIDE SEQUENCE [LARGE SCALE GENOMIC DNA]</scope>
    <source>
        <strain>ATCC 17616 / 249</strain>
    </source>
</reference>
<reference key="3">
    <citation type="submission" date="2007-10" db="EMBL/GenBank/DDBJ databases">
        <title>Complete sequence of chromosome 3 of Burkholderia multivorans ATCC 17616.</title>
        <authorList>
            <person name="Copeland A."/>
            <person name="Lucas S."/>
            <person name="Lapidus A."/>
            <person name="Barry K."/>
            <person name="Glavina del Rio T."/>
            <person name="Dalin E."/>
            <person name="Tice H."/>
            <person name="Pitluck S."/>
            <person name="Chain P."/>
            <person name="Malfatti S."/>
            <person name="Shin M."/>
            <person name="Vergez L."/>
            <person name="Schmutz J."/>
            <person name="Larimer F."/>
            <person name="Land M."/>
            <person name="Hauser L."/>
            <person name="Kyrpides N."/>
            <person name="Kim E."/>
            <person name="Tiedje J."/>
            <person name="Richardson P."/>
        </authorList>
    </citation>
    <scope>NUCLEOTIDE SEQUENCE [LARGE SCALE GENOMIC DNA]</scope>
    <source>
        <strain>ATCC 17616 / 249</strain>
    </source>
</reference>
<reference key="4">
    <citation type="submission" date="2007-10" db="EMBL/GenBank/DDBJ databases">
        <title>Complete sequence of plasmid 1 of Burkholderia multivorans ATCC 17616.</title>
        <authorList>
            <person name="Copeland A."/>
            <person name="Lucas S."/>
            <person name="Lapidus A."/>
            <person name="Barry K."/>
            <person name="Glavina del Rio T."/>
            <person name="Dalin E."/>
            <person name="Tice H."/>
            <person name="Pitluck S."/>
            <person name="Chain P."/>
            <person name="Malfatti S."/>
            <person name="Shin M."/>
            <person name="Vergez L."/>
            <person name="Schmutz J."/>
            <person name="Larimer F."/>
            <person name="Land M."/>
            <person name="Hauser L."/>
            <person name="Kyrpides N."/>
            <person name="Kim E."/>
            <person name="Tiedje J."/>
            <person name="Richardson P."/>
        </authorList>
    </citation>
    <scope>NUCLEOTIDE SEQUENCE [LARGE SCALE GENOMIC DNA]</scope>
    <source>
        <strain>ATCC 17616 / 249</strain>
        <plasmid>pBMUL01</plasmid>
    </source>
</reference>
<reference key="5">
    <citation type="submission" date="2007-04" db="EMBL/GenBank/DDBJ databases">
        <title>Complete genome sequence of Burkholderia multivorans ATCC 17616.</title>
        <authorList>
            <person name="Ohtsubo Y."/>
            <person name="Yamashita A."/>
            <person name="Kurokawa K."/>
            <person name="Takami H."/>
            <person name="Yuhara S."/>
            <person name="Nishiyama E."/>
            <person name="Endo R."/>
            <person name="Miyazaki R."/>
            <person name="Ono A."/>
            <person name="Yano K."/>
            <person name="Ito M."/>
            <person name="Sota M."/>
            <person name="Yuji N."/>
            <person name="Hattori M."/>
            <person name="Tsuda M."/>
        </authorList>
    </citation>
    <scope>NUCLEOTIDE SEQUENCE [LARGE SCALE GENOMIC DNA]</scope>
    <source>
        <strain>ATCC 17616 / 249</strain>
        <plasmid>pTGL1</plasmid>
    </source>
</reference>
<keyword id="KW-0233">DNA recombination</keyword>
<keyword id="KW-0238">DNA-binding</keyword>
<keyword id="KW-0614">Plasmid</keyword>
<keyword id="KW-1185">Reference proteome</keyword>
<keyword id="KW-0814">Transposable element</keyword>
<keyword id="KW-0815">Transposition</keyword>
<accession>Q51649</accession>
<accession>A9AMU0</accession>
<gene>
    <name type="ordered locus">Bmul_4730</name>
    <name type="ordered locus">BMULJ_03785</name>
</gene>
<gene>
    <name type="ordered locus">Bmul_5628</name>
    <name type="ordered locus">BMULJ_05881</name>
</gene>
<gene>
    <name type="ordered locus">Bmul_6206</name>
    <name type="ordered locus">BMULJ_06213</name>
</gene>
<proteinExistence type="inferred from homology"/>
<protein>
    <recommendedName>
        <fullName>Putative transposase for insertion sequence IS408</fullName>
    </recommendedName>
</protein>
<sequence>MPTPRMSMRKLKEVLRLKWACGLTHRQISRAIGISVGAVSKFAAQASQAGLDWAAAEAMSDDELDARLRPAATNAAATTTRRIEPDYTALHRELRRKGVTLQLLWEEYAEANPGQRTYRYTQFCQKYKDWAKSIKRSMRQQHRAGEKLFADFAGPTVPVLASDGGVEFEAHVFVAVLGASNYTFACATRTETMADWIGSLCDALEFIGGVPELLVPDNPKALIARPDRYEPGLGTTTQDFVNHYGTAMLPARPRKPQDKAKVEVGVQIVERWVLARLRHYRFYSLAELNKAIAELIADLNQRPFKRLEGNRREWFERLDQPVLRPLPVRRYEIATFQKCRVNIDYHVDVGGHYYSVPHSLARQEVWARITRHGVEILHGGKRVAAHARSRLKGKHTTIAEHMPAAHRAHMEWTPGRLLNWGASVGPGAEAVVRHLLTNKPHPEMGYRACLGLLSLARKYGKHRLEAACQRALKIGSPTRRSVLSILEAGLDLQPSLPTTPAEWRSPEHENVRGPDYYH</sequence>
<feature type="chain" id="PRO_0000075466" description="Putative transposase for insertion sequence IS408">
    <location>
        <begin position="1"/>
        <end position="518"/>
    </location>
</feature>
<feature type="domain" description="HTH IS408-type" evidence="2">
    <location>
        <begin position="11"/>
        <end position="94"/>
    </location>
</feature>
<feature type="domain" description="Integrase catalytic" evidence="1">
    <location>
        <begin position="140"/>
        <end position="335"/>
    </location>
</feature>
<feature type="DNA-binding region" description="H-T-H motif" evidence="2">
    <location>
        <begin position="23"/>
        <end position="44"/>
    </location>
</feature>
<feature type="region of interest" description="Disordered" evidence="3">
    <location>
        <begin position="496"/>
        <end position="518"/>
    </location>
</feature>
<feature type="compositionally biased region" description="Basic and acidic residues" evidence="3">
    <location>
        <begin position="504"/>
        <end position="518"/>
    </location>
</feature>
<name>T408_BURM1</name>
<evidence type="ECO:0000255" key="1">
    <source>
        <dbReference type="PROSITE-ProRule" id="PRU00457"/>
    </source>
</evidence>
<evidence type="ECO:0000255" key="2">
    <source>
        <dbReference type="PROSITE-ProRule" id="PRU00616"/>
    </source>
</evidence>
<evidence type="ECO:0000256" key="3">
    <source>
        <dbReference type="SAM" id="MobiDB-lite"/>
    </source>
</evidence>
<evidence type="ECO:0000305" key="4"/>
<geneLocation type="plasmid">
    <name>pBMUL01</name>
</geneLocation>
<geneLocation type="plasmid">
    <name>pTGL1</name>
</geneLocation>